<geneLocation type="chloroplast"/>
<reference key="1">
    <citation type="submission" date="2007-03" db="EMBL/GenBank/DDBJ databases">
        <title>Sequencing analysis of Arabis hirsuta chloroplast DNA.</title>
        <authorList>
            <person name="Hosouchi T."/>
            <person name="Tsuruoka H."/>
            <person name="Kotani H."/>
        </authorList>
    </citation>
    <scope>NUCLEOTIDE SEQUENCE [LARGE SCALE GENOMIC DNA]</scope>
</reference>
<proteinExistence type="inferred from homology"/>
<name>PSBA_ARAHI</name>
<accession>A4QJZ9</accession>
<dbReference type="EC" id="1.10.3.9" evidence="2"/>
<dbReference type="EMBL" id="AP009369">
    <property type="protein sequence ID" value="BAF50004.1"/>
    <property type="molecule type" value="Genomic_DNA"/>
</dbReference>
<dbReference type="RefSeq" id="YP_001123180.1">
    <property type="nucleotide sequence ID" value="NC_009268.1"/>
</dbReference>
<dbReference type="SMR" id="A4QJZ9"/>
<dbReference type="GeneID" id="4962535"/>
<dbReference type="GO" id="GO:0009535">
    <property type="term" value="C:chloroplast thylakoid membrane"/>
    <property type="evidence" value="ECO:0007669"/>
    <property type="project" value="UniProtKB-SubCell"/>
</dbReference>
<dbReference type="GO" id="GO:0009523">
    <property type="term" value="C:photosystem II"/>
    <property type="evidence" value="ECO:0007669"/>
    <property type="project" value="UniProtKB-KW"/>
</dbReference>
<dbReference type="GO" id="GO:0016168">
    <property type="term" value="F:chlorophyll binding"/>
    <property type="evidence" value="ECO:0007669"/>
    <property type="project" value="UniProtKB-UniRule"/>
</dbReference>
<dbReference type="GO" id="GO:0045156">
    <property type="term" value="F:electron transporter, transferring electrons within the cyclic electron transport pathway of photosynthesis activity"/>
    <property type="evidence" value="ECO:0007669"/>
    <property type="project" value="InterPro"/>
</dbReference>
<dbReference type="GO" id="GO:0005506">
    <property type="term" value="F:iron ion binding"/>
    <property type="evidence" value="ECO:0007669"/>
    <property type="project" value="UniProtKB-UniRule"/>
</dbReference>
<dbReference type="GO" id="GO:0016682">
    <property type="term" value="F:oxidoreductase activity, acting on diphenols and related substances as donors, oxygen as acceptor"/>
    <property type="evidence" value="ECO:0007669"/>
    <property type="project" value="UniProtKB-UniRule"/>
</dbReference>
<dbReference type="GO" id="GO:0010242">
    <property type="term" value="F:oxygen evolving activity"/>
    <property type="evidence" value="ECO:0007669"/>
    <property type="project" value="UniProtKB-EC"/>
</dbReference>
<dbReference type="GO" id="GO:0009772">
    <property type="term" value="P:photosynthetic electron transport in photosystem II"/>
    <property type="evidence" value="ECO:0007669"/>
    <property type="project" value="InterPro"/>
</dbReference>
<dbReference type="GO" id="GO:0009635">
    <property type="term" value="P:response to herbicide"/>
    <property type="evidence" value="ECO:0007669"/>
    <property type="project" value="UniProtKB-KW"/>
</dbReference>
<dbReference type="CDD" id="cd09289">
    <property type="entry name" value="Photosystem-II_D1"/>
    <property type="match status" value="1"/>
</dbReference>
<dbReference type="FunFam" id="1.20.85.10:FF:000002">
    <property type="entry name" value="Photosystem II protein D1"/>
    <property type="match status" value="1"/>
</dbReference>
<dbReference type="Gene3D" id="1.20.85.10">
    <property type="entry name" value="Photosystem II protein D1-like"/>
    <property type="match status" value="1"/>
</dbReference>
<dbReference type="HAMAP" id="MF_01379">
    <property type="entry name" value="PSII_PsbA_D1"/>
    <property type="match status" value="1"/>
</dbReference>
<dbReference type="InterPro" id="IPR055266">
    <property type="entry name" value="D1/D2"/>
</dbReference>
<dbReference type="InterPro" id="IPR036854">
    <property type="entry name" value="Photo_II_D1/D2_sf"/>
</dbReference>
<dbReference type="InterPro" id="IPR000484">
    <property type="entry name" value="Photo_RC_L/M"/>
</dbReference>
<dbReference type="InterPro" id="IPR055265">
    <property type="entry name" value="Photo_RC_L/M_CS"/>
</dbReference>
<dbReference type="InterPro" id="IPR005867">
    <property type="entry name" value="PSII_D1"/>
</dbReference>
<dbReference type="NCBIfam" id="TIGR01151">
    <property type="entry name" value="psbA"/>
    <property type="match status" value="1"/>
</dbReference>
<dbReference type="PANTHER" id="PTHR33149:SF12">
    <property type="entry name" value="PHOTOSYSTEM II D2 PROTEIN"/>
    <property type="match status" value="1"/>
</dbReference>
<dbReference type="PANTHER" id="PTHR33149">
    <property type="entry name" value="PHOTOSYSTEM II PROTEIN D1"/>
    <property type="match status" value="1"/>
</dbReference>
<dbReference type="Pfam" id="PF00124">
    <property type="entry name" value="Photo_RC"/>
    <property type="match status" value="1"/>
</dbReference>
<dbReference type="PRINTS" id="PR00256">
    <property type="entry name" value="REACTNCENTRE"/>
</dbReference>
<dbReference type="SUPFAM" id="SSF81483">
    <property type="entry name" value="Bacterial photosystem II reaction centre, L and M subunits"/>
    <property type="match status" value="1"/>
</dbReference>
<dbReference type="PROSITE" id="PS00244">
    <property type="entry name" value="REACTION_CENTER"/>
    <property type="match status" value="1"/>
</dbReference>
<comment type="function">
    <text evidence="2">Photosystem II (PSII) is a light-driven water:plastoquinone oxidoreductase that uses light energy to abstract electrons from H(2)O, generating O(2) and a proton gradient subsequently used for ATP formation. It consists of a core antenna complex that captures photons, and an electron transfer chain that converts photonic excitation into a charge separation. The D1/D2 (PsbA/PsbD) reaction center heterodimer binds P680, the primary electron donor of PSII as well as several subsequent electron acceptors.</text>
</comment>
<comment type="catalytic activity">
    <reaction evidence="2">
        <text>2 a plastoquinone + 4 hnu + 2 H2O = 2 a plastoquinol + O2</text>
        <dbReference type="Rhea" id="RHEA:36359"/>
        <dbReference type="Rhea" id="RHEA-COMP:9561"/>
        <dbReference type="Rhea" id="RHEA-COMP:9562"/>
        <dbReference type="ChEBI" id="CHEBI:15377"/>
        <dbReference type="ChEBI" id="CHEBI:15379"/>
        <dbReference type="ChEBI" id="CHEBI:17757"/>
        <dbReference type="ChEBI" id="CHEBI:30212"/>
        <dbReference type="ChEBI" id="CHEBI:62192"/>
        <dbReference type="EC" id="1.10.3.9"/>
    </reaction>
</comment>
<comment type="cofactor">
    <text evidence="2">The D1/D2 heterodimer binds P680, chlorophylls that are the primary electron donor of PSII, and subsequent electron acceptors. It shares a non-heme iron and each subunit binds pheophytin, quinone, additional chlorophylls, carotenoids and lipids. D1 provides most of the ligands for the Mn4-Ca-O5 cluster of the oxygen-evolving complex (OEC). There is also a Cl(-1) ion associated with D1 and D2, which is required for oxygen evolution. The PSII complex binds additional chlorophylls, carotenoids and specific lipids.</text>
</comment>
<comment type="subunit">
    <text evidence="2">PSII is composed of 1 copy each of membrane proteins PsbA, PsbB, PsbC, PsbD, PsbE, PsbF, PsbH, PsbI, PsbJ, PsbK, PsbL, PsbM, PsbT, PsbX, PsbY, PsbZ, Psb30/Ycf12, at least 3 peripheral proteins of the oxygen-evolving complex and a large number of cofactors. It forms dimeric complexes.</text>
</comment>
<comment type="subcellular location">
    <subcellularLocation>
        <location evidence="2">Plastid</location>
        <location evidence="2">Chloroplast thylakoid membrane</location>
        <topology evidence="2">Multi-pass membrane protein</topology>
    </subcellularLocation>
</comment>
<comment type="PTM">
    <text evidence="2">Tyr-161 forms a radical intermediate that is referred to as redox-active TyrZ, YZ or Y-Z.</text>
</comment>
<comment type="PTM">
    <text evidence="2">C-terminally processed by CTPA; processing is essential to allow assembly of the oxygen-evolving complex and thus photosynthetic growth.</text>
</comment>
<comment type="miscellaneous">
    <text evidence="2">2 of the reaction center chlorophylls (ChlD1 and ChlD2) are entirely coordinated by water.</text>
</comment>
<comment type="miscellaneous">
    <text evidence="2">Herbicides such as atrazine, BNT, diuron or ioxynil bind in the Q(B) binding site and block subsequent electron transfer.</text>
</comment>
<comment type="similarity">
    <text evidence="2">Belongs to the reaction center PufL/M/PsbA/D family.</text>
</comment>
<gene>
    <name evidence="2" type="primary">psbA</name>
</gene>
<evidence type="ECO:0000250" key="1">
    <source>
        <dbReference type="UniProtKB" id="P83755"/>
    </source>
</evidence>
<evidence type="ECO:0000255" key="2">
    <source>
        <dbReference type="HAMAP-Rule" id="MF_01379"/>
    </source>
</evidence>
<sequence length="353" mass="38937">MTAILERRESESLWGRFCNWITSTENRLYIGWFGVLMIPTLLTATSVFIIAFIAAPPVDIDGIREPVSGSLLYGNNIISGAIIPTSAAIGLHFYPIWEAASVDEWLYNGGPYELIVLHFLLGVACYMGREWELSFRLGMRPWIAVAYSAPVAAATAVFLIYPIGQGSFSDGMPLGISGTFNFMIVFQAEHNILMHPFHMLGVAGVFGGSLFSAMHGSLVTSSLIRETTENESANEGYRFGQEEETYNIVAAHGYFGRLIFQYASFNNSRSLHFFLAAWPVVGIWFTALGISTMAFNLNGFNFNQSVVDSQGRVINTWADIINRANLGMEVMHERNAHNFPLDLAAVEAPSTNG</sequence>
<protein>
    <recommendedName>
        <fullName evidence="2">Photosystem II protein D1</fullName>
        <shortName evidence="2">PSII D1 protein</shortName>
        <ecNumber evidence="2">1.10.3.9</ecNumber>
    </recommendedName>
    <alternativeName>
        <fullName evidence="2">Photosystem II Q(B) protein</fullName>
    </alternativeName>
</protein>
<feature type="initiator methionine" description="Removed" evidence="1">
    <location>
        <position position="1"/>
    </location>
</feature>
<feature type="chain" id="PRO_0000339948" description="Photosystem II protein D1" evidence="2">
    <location>
        <begin position="2"/>
        <end position="344"/>
    </location>
</feature>
<feature type="propeptide" id="PRO_0000339949" evidence="2">
    <location>
        <begin position="345"/>
        <end position="353"/>
    </location>
</feature>
<feature type="transmembrane region" description="Helical" evidence="2">
    <location>
        <begin position="29"/>
        <end position="46"/>
    </location>
</feature>
<feature type="transmembrane region" description="Helical" evidence="2">
    <location>
        <begin position="118"/>
        <end position="133"/>
    </location>
</feature>
<feature type="transmembrane region" description="Helical" evidence="2">
    <location>
        <begin position="142"/>
        <end position="156"/>
    </location>
</feature>
<feature type="transmembrane region" description="Helical" evidence="2">
    <location>
        <begin position="197"/>
        <end position="218"/>
    </location>
</feature>
<feature type="transmembrane region" description="Helical" evidence="2">
    <location>
        <begin position="274"/>
        <end position="288"/>
    </location>
</feature>
<feature type="binding site" description="axial binding residue" evidence="2">
    <location>
        <position position="118"/>
    </location>
    <ligand>
        <name>chlorophyll a</name>
        <dbReference type="ChEBI" id="CHEBI:58416"/>
        <label>ChlzD1</label>
    </ligand>
    <ligandPart>
        <name>Mg</name>
        <dbReference type="ChEBI" id="CHEBI:25107"/>
    </ligandPart>
</feature>
<feature type="binding site" evidence="2">
    <location>
        <position position="126"/>
    </location>
    <ligand>
        <name>pheophytin a</name>
        <dbReference type="ChEBI" id="CHEBI:136840"/>
        <label>D1</label>
    </ligand>
</feature>
<feature type="binding site" evidence="2">
    <location>
        <position position="170"/>
    </location>
    <ligand>
        <name>[CaMn4O5] cluster</name>
        <dbReference type="ChEBI" id="CHEBI:189552"/>
    </ligand>
</feature>
<feature type="binding site" evidence="2">
    <location>
        <position position="189"/>
    </location>
    <ligand>
        <name>[CaMn4O5] cluster</name>
        <dbReference type="ChEBI" id="CHEBI:189552"/>
    </ligand>
</feature>
<feature type="binding site" description="axial binding residue" evidence="2">
    <location>
        <position position="198"/>
    </location>
    <ligand>
        <name>chlorophyll a</name>
        <dbReference type="ChEBI" id="CHEBI:58416"/>
        <label>PD1</label>
    </ligand>
    <ligandPart>
        <name>Mg</name>
        <dbReference type="ChEBI" id="CHEBI:25107"/>
    </ligandPart>
</feature>
<feature type="binding site" evidence="2">
    <location>
        <position position="215"/>
    </location>
    <ligand>
        <name>a quinone</name>
        <dbReference type="ChEBI" id="CHEBI:132124"/>
        <label>B</label>
    </ligand>
</feature>
<feature type="binding site" evidence="2">
    <location>
        <position position="215"/>
    </location>
    <ligand>
        <name>Fe cation</name>
        <dbReference type="ChEBI" id="CHEBI:24875"/>
        <note>ligand shared with heterodimeric partner</note>
    </ligand>
</feature>
<feature type="binding site" evidence="2">
    <location>
        <begin position="264"/>
        <end position="265"/>
    </location>
    <ligand>
        <name>a quinone</name>
        <dbReference type="ChEBI" id="CHEBI:132124"/>
        <label>B</label>
    </ligand>
</feature>
<feature type="binding site" evidence="2">
    <location>
        <position position="272"/>
    </location>
    <ligand>
        <name>Fe cation</name>
        <dbReference type="ChEBI" id="CHEBI:24875"/>
        <note>ligand shared with heterodimeric partner</note>
    </ligand>
</feature>
<feature type="binding site" evidence="2">
    <location>
        <position position="332"/>
    </location>
    <ligand>
        <name>[CaMn4O5] cluster</name>
        <dbReference type="ChEBI" id="CHEBI:189552"/>
    </ligand>
</feature>
<feature type="binding site" evidence="2">
    <location>
        <position position="333"/>
    </location>
    <ligand>
        <name>[CaMn4O5] cluster</name>
        <dbReference type="ChEBI" id="CHEBI:189552"/>
    </ligand>
</feature>
<feature type="binding site" evidence="2">
    <location>
        <position position="342"/>
    </location>
    <ligand>
        <name>[CaMn4O5] cluster</name>
        <dbReference type="ChEBI" id="CHEBI:189552"/>
    </ligand>
</feature>
<feature type="binding site" evidence="2">
    <location>
        <position position="344"/>
    </location>
    <ligand>
        <name>[CaMn4O5] cluster</name>
        <dbReference type="ChEBI" id="CHEBI:189552"/>
    </ligand>
</feature>
<feature type="site" description="Tyrosine radical intermediate" evidence="2">
    <location>
        <position position="161"/>
    </location>
</feature>
<feature type="site" description="Stabilizes free radical intermediate" evidence="2">
    <location>
        <position position="190"/>
    </location>
</feature>
<feature type="site" description="Cleavage; by CTPA" evidence="2">
    <location>
        <begin position="344"/>
        <end position="345"/>
    </location>
</feature>
<feature type="modified residue" description="N-acetylthreonine" evidence="1 2">
    <location>
        <position position="2"/>
    </location>
</feature>
<feature type="modified residue" description="Phosphothreonine" evidence="1 2">
    <location>
        <position position="2"/>
    </location>
</feature>
<keyword id="KW-0007">Acetylation</keyword>
<keyword id="KW-0106">Calcium</keyword>
<keyword id="KW-0148">Chlorophyll</keyword>
<keyword id="KW-0150">Chloroplast</keyword>
<keyword id="KW-0157">Chromophore</keyword>
<keyword id="KW-0249">Electron transport</keyword>
<keyword id="KW-0359">Herbicide resistance</keyword>
<keyword id="KW-0408">Iron</keyword>
<keyword id="KW-0460">Magnesium</keyword>
<keyword id="KW-0464">Manganese</keyword>
<keyword id="KW-0472">Membrane</keyword>
<keyword id="KW-0479">Metal-binding</keyword>
<keyword id="KW-0560">Oxidoreductase</keyword>
<keyword id="KW-0597">Phosphoprotein</keyword>
<keyword id="KW-0602">Photosynthesis</keyword>
<keyword id="KW-0604">Photosystem II</keyword>
<keyword id="KW-0934">Plastid</keyword>
<keyword id="KW-0793">Thylakoid</keyword>
<keyword id="KW-0812">Transmembrane</keyword>
<keyword id="KW-1133">Transmembrane helix</keyword>
<keyword id="KW-0813">Transport</keyword>
<organism>
    <name type="scientific">Arabis hirsuta</name>
    <name type="common">Hairy rock-cress</name>
    <name type="synonym">Turritis hirsuta</name>
    <dbReference type="NCBI Taxonomy" id="78191"/>
    <lineage>
        <taxon>Eukaryota</taxon>
        <taxon>Viridiplantae</taxon>
        <taxon>Streptophyta</taxon>
        <taxon>Embryophyta</taxon>
        <taxon>Tracheophyta</taxon>
        <taxon>Spermatophyta</taxon>
        <taxon>Magnoliopsida</taxon>
        <taxon>eudicotyledons</taxon>
        <taxon>Gunneridae</taxon>
        <taxon>Pentapetalae</taxon>
        <taxon>rosids</taxon>
        <taxon>malvids</taxon>
        <taxon>Brassicales</taxon>
        <taxon>Brassicaceae</taxon>
        <taxon>Arabideae</taxon>
        <taxon>Arabis</taxon>
    </lineage>
</organism>